<feature type="chain" id="PRO_0000314254" description="Monocarboxylate transporter 10">
    <location>
        <begin position="1"/>
        <end position="512"/>
    </location>
</feature>
<feature type="topological domain" description="Cytoplasmic" evidence="9">
    <location>
        <begin position="1"/>
        <end position="63"/>
    </location>
</feature>
<feature type="transmembrane region" description="Helical; Name=1" evidence="3">
    <location>
        <begin position="64"/>
        <end position="84"/>
    </location>
</feature>
<feature type="topological domain" description="Extracellular" evidence="9">
    <location>
        <begin position="85"/>
        <end position="111"/>
    </location>
</feature>
<feature type="transmembrane region" description="Helical; Name=2" evidence="3">
    <location>
        <begin position="112"/>
        <end position="132"/>
    </location>
</feature>
<feature type="topological domain" description="Cytoplasmic" evidence="9">
    <location>
        <begin position="133"/>
        <end position="141"/>
    </location>
</feature>
<feature type="transmembrane region" description="Helical; Name=3" evidence="3">
    <location>
        <begin position="142"/>
        <end position="162"/>
    </location>
</feature>
<feature type="topological domain" description="Extracellular" evidence="9">
    <location>
        <begin position="163"/>
        <end position="168"/>
    </location>
</feature>
<feature type="transmembrane region" description="Helical; Name=4" evidence="3">
    <location>
        <begin position="169"/>
        <end position="189"/>
    </location>
</feature>
<feature type="topological domain" description="Cytoplasmic" evidence="9">
    <location>
        <begin position="190"/>
        <end position="201"/>
    </location>
</feature>
<feature type="transmembrane region" description="Helical; Name=5" evidence="3">
    <location>
        <begin position="202"/>
        <end position="222"/>
    </location>
</feature>
<feature type="topological domain" description="Extracellular" evidence="9">
    <location>
        <begin position="223"/>
        <end position="232"/>
    </location>
</feature>
<feature type="transmembrane region" description="Helical; Name=6" evidence="3">
    <location>
        <begin position="233"/>
        <end position="253"/>
    </location>
</feature>
<feature type="topological domain" description="Cytoplasmic" evidence="9">
    <location>
        <begin position="254"/>
        <end position="291"/>
    </location>
</feature>
<feature type="transmembrane region" description="Helical; Name=7" evidence="3">
    <location>
        <begin position="292"/>
        <end position="312"/>
    </location>
</feature>
<feature type="topological domain" description="Extracellular" evidence="9">
    <location>
        <begin position="313"/>
        <end position="326"/>
    </location>
</feature>
<feature type="transmembrane region" description="Helical; Name=8" evidence="3">
    <location>
        <begin position="327"/>
        <end position="347"/>
    </location>
</feature>
<feature type="topological domain" description="Cytoplasmic" evidence="9">
    <location>
        <begin position="348"/>
        <end position="362"/>
    </location>
</feature>
<feature type="transmembrane region" description="Helical; Name=9" evidence="3">
    <location>
        <begin position="363"/>
        <end position="383"/>
    </location>
</feature>
<feature type="topological domain" description="Extracellular" evidence="9">
    <location>
        <position position="384"/>
    </location>
</feature>
<feature type="transmembrane region" description="Helical; Name=10" evidence="3">
    <location>
        <begin position="385"/>
        <end position="405"/>
    </location>
</feature>
<feature type="topological domain" description="Cytoplasmic" evidence="9">
    <location>
        <begin position="406"/>
        <end position="416"/>
    </location>
</feature>
<feature type="transmembrane region" description="Helical; Name=11" evidence="3">
    <location>
        <begin position="417"/>
        <end position="437"/>
    </location>
</feature>
<feature type="topological domain" description="Extracellular" evidence="9">
    <location>
        <begin position="438"/>
        <end position="448"/>
    </location>
</feature>
<feature type="transmembrane region" description="Helical; Name=12" evidence="3">
    <location>
        <begin position="449"/>
        <end position="469"/>
    </location>
</feature>
<feature type="topological domain" description="Cytoplasmic" evidence="9">
    <location>
        <begin position="470"/>
        <end position="512"/>
    </location>
</feature>
<feature type="region of interest" description="Disordered" evidence="4">
    <location>
        <begin position="1"/>
        <end position="44"/>
    </location>
</feature>
<feature type="modified residue" description="Phosphoserine" evidence="2">
    <location>
        <position position="260"/>
    </location>
</feature>
<feature type="modified residue" description="Phosphoserine" evidence="11">
    <location>
        <position position="495"/>
    </location>
</feature>
<feature type="modified residue" description="Phosphoserine" evidence="11 12">
    <location>
        <position position="498"/>
    </location>
</feature>
<feature type="modified residue" description="Phosphoserine" evidence="12">
    <location>
        <position position="500"/>
    </location>
</feature>
<feature type="modified residue" description="Phosphoserine" evidence="11 12">
    <location>
        <position position="501"/>
    </location>
</feature>
<feature type="splice variant" id="VSP_030252" description="In isoform 2." evidence="8">
    <original>MNHVKERFQ</original>
    <variation>VSMHLWLCL</variation>
    <location>
        <begin position="312"/>
        <end position="320"/>
    </location>
</feature>
<feature type="splice variant" id="VSP_030253" description="In isoform 2." evidence="8">
    <location>
        <begin position="321"/>
        <end position="512"/>
    </location>
</feature>
<feature type="sequence conflict" description="In Ref. 1; BAE30275." evidence="9" ref="1">
    <original>T</original>
    <variation>I</variation>
    <location>
        <position position="211"/>
    </location>
</feature>
<accession>Q3U9N9</accession>
<accession>Q3TNJ1</accession>
<accession>Q3UAN9</accession>
<accession>Q8BWR7</accession>
<protein>
    <recommendedName>
        <fullName>Monocarboxylate transporter 10</fullName>
        <shortName>MCT 10</shortName>
    </recommendedName>
    <alternativeName>
        <fullName>Aromatic amino acid transporter 1</fullName>
    </alternativeName>
    <alternativeName>
        <fullName>Solute carrier family 16 member 10</fullName>
    </alternativeName>
    <alternativeName>
        <fullName>T-type amino acid transporter 1</fullName>
    </alternativeName>
</protein>
<sequence>MVPSQEEPAAERETNEAQPPGPAPSDDAPLPGPGPSDVSDVAAEKVEVELTRSAGSEPPVPPEGGWGWLVMLAAMWCNGSVFGIQNAYGVLFVSMLDTFKAKDDDNMAFKTAWVGSLSMGMIFFCCPIVSVFTDMFGCRRTAVVGAAVGFIGLMSSSFVSSIEPLYLTYGIIFACGCSFAYQPSLVILGHYFKKRLGLVNGIVTAGSSVFTILLPLLLGNLISSVKLFNTLRILCIFMFVLFLAGFTYRPLVPSTKEKESGGSRSSFFSRRKLSPPKKVFNFALFKETTYAVWAAGIPLALFGYFVPYVHLMNHVKERFQDVNNKEVLFMCIGITSGVGRLLFGRIADYLPGVKKVYLQVLSFFFIGLMSMMIPLCSAFGALIAVCLAMGLFDGCFISIMAPIAFELVGPQDASQAIGFLLGFMSIPMTVGPPIAGLLHDKLGTYDVAFYLAGIPPFVGGVVLCLIPWIHSKKQRKISKNAGGEKMEKMLENQSSLLSGSSGIFKKDSASII</sequence>
<organism>
    <name type="scientific">Mus musculus</name>
    <name type="common">Mouse</name>
    <dbReference type="NCBI Taxonomy" id="10090"/>
    <lineage>
        <taxon>Eukaryota</taxon>
        <taxon>Metazoa</taxon>
        <taxon>Chordata</taxon>
        <taxon>Craniata</taxon>
        <taxon>Vertebrata</taxon>
        <taxon>Euteleostomi</taxon>
        <taxon>Mammalia</taxon>
        <taxon>Eutheria</taxon>
        <taxon>Euarchontoglires</taxon>
        <taxon>Glires</taxon>
        <taxon>Rodentia</taxon>
        <taxon>Myomorpha</taxon>
        <taxon>Muroidea</taxon>
        <taxon>Muridae</taxon>
        <taxon>Murinae</taxon>
        <taxon>Mus</taxon>
        <taxon>Mus</taxon>
    </lineage>
</organism>
<name>MOT10_MOUSE</name>
<keyword id="KW-0025">Alternative splicing</keyword>
<keyword id="KW-1003">Cell membrane</keyword>
<keyword id="KW-0472">Membrane</keyword>
<keyword id="KW-0597">Phosphoprotein</keyword>
<keyword id="KW-1185">Reference proteome</keyword>
<keyword id="KW-0812">Transmembrane</keyword>
<keyword id="KW-1133">Transmembrane helix</keyword>
<keyword id="KW-0813">Transport</keyword>
<comment type="function">
    <text evidence="1 5 6">Sodium- and proton-independent thyroid hormones and aromatic acids transporter. Mediates both uptake and efflux of 3,5,3'-triiodothyronine (T3) and 3,5,3',5'-tetraiodothyronine (T4) with high affinity, suggesting a role in the homeostasis of thyroid hormone levels (By similarity). Responsible for low affinity bidirectional transport of the aromatic amino acids, such as phenylalanine, tyrosine, tryptophan and L-3,4-dihydroxyphenylalanine (L-dopa) (PubMed:16245314). Plays an important role in homeostasis of aromatic amino acids (PubMed:23045339).</text>
</comment>
<comment type="catalytic activity">
    <reaction evidence="5">
        <text>L-tryptophan(in) = L-tryptophan(out)</text>
        <dbReference type="Rhea" id="RHEA:70947"/>
        <dbReference type="ChEBI" id="CHEBI:57912"/>
    </reaction>
    <physiologicalReaction direction="left-to-right" evidence="10">
        <dbReference type="Rhea" id="RHEA:70948"/>
    </physiologicalReaction>
    <physiologicalReaction direction="right-to-left" evidence="10">
        <dbReference type="Rhea" id="RHEA:70949"/>
    </physiologicalReaction>
</comment>
<comment type="catalytic activity">
    <reaction evidence="5">
        <text>L-tyrosine(in) = L-tyrosine(out)</text>
        <dbReference type="Rhea" id="RHEA:68572"/>
        <dbReference type="ChEBI" id="CHEBI:58315"/>
    </reaction>
    <physiologicalReaction direction="left-to-right" evidence="10">
        <dbReference type="Rhea" id="RHEA:68573"/>
    </physiologicalReaction>
    <physiologicalReaction direction="right-to-left" evidence="10">
        <dbReference type="Rhea" id="RHEA:68574"/>
    </physiologicalReaction>
</comment>
<comment type="catalytic activity">
    <reaction evidence="5">
        <text>L-phenylalanine(in) = L-phenylalanine(out)</text>
        <dbReference type="Rhea" id="RHEA:27950"/>
        <dbReference type="ChEBI" id="CHEBI:58095"/>
    </reaction>
    <physiologicalReaction direction="left-to-right" evidence="10">
        <dbReference type="Rhea" id="RHEA:27951"/>
    </physiologicalReaction>
    <physiologicalReaction direction="right-to-left" evidence="10">
        <dbReference type="Rhea" id="RHEA:27952"/>
    </physiologicalReaction>
</comment>
<comment type="catalytic activity">
    <reaction evidence="1">
        <text>3,3',5-triiodo-L-thyronine(out) = 3,3',5-triiodo-L-thyronine(in)</text>
        <dbReference type="Rhea" id="RHEA:71811"/>
        <dbReference type="ChEBI" id="CHEBI:533015"/>
    </reaction>
    <physiologicalReaction direction="left-to-right" evidence="1">
        <dbReference type="Rhea" id="RHEA:71812"/>
    </physiologicalReaction>
    <physiologicalReaction direction="right-to-left" evidence="1">
        <dbReference type="Rhea" id="RHEA:71813"/>
    </physiologicalReaction>
</comment>
<comment type="catalytic activity">
    <reaction evidence="1">
        <text>L-thyroxine(out) = L-thyroxine(in)</text>
        <dbReference type="Rhea" id="RHEA:71819"/>
        <dbReference type="ChEBI" id="CHEBI:58448"/>
    </reaction>
    <physiologicalReaction direction="left-to-right" evidence="1">
        <dbReference type="Rhea" id="RHEA:71820"/>
    </physiologicalReaction>
    <physiologicalReaction direction="right-to-left" evidence="1">
        <dbReference type="Rhea" id="RHEA:71821"/>
    </physiologicalReaction>
</comment>
<comment type="subcellular location">
    <subcellularLocation>
        <location evidence="5">Cell membrane</location>
        <topology evidence="3">Multi-pass membrane protein</topology>
    </subcellularLocation>
    <subcellularLocation>
        <location evidence="5">Basolateral cell membrane</location>
        <topology evidence="3">Multi-pass membrane protein</topology>
    </subcellularLocation>
    <text evidence="5">Detected in basolateral membrane of kidney proximal tubule starting at he beginning of the proximal tubule epithelium within the glomerular capsule and extending to the S1 and S2 segments. Also localizes to the basolateral membrane of small intestine enterocytes and to sinusoidal side of perivenous hepatocytes.</text>
</comment>
<comment type="alternative products">
    <event type="alternative splicing"/>
    <isoform>
        <id>Q3U9N9-1</id>
        <name>1</name>
        <sequence type="displayed"/>
    </isoform>
    <isoform>
        <id>Q3U9N9-2</id>
        <name>2</name>
        <sequence type="described" ref="VSP_030252 VSP_030253"/>
    </isoform>
</comment>
<comment type="tissue specificity">
    <text evidence="5 7">Highly expressed in small intestine, particularly in jejunum and ileum, scarcely in colon and substantially in kidney, liver and skeletal muscle (PubMed:16245314). In the brain expression is low and appears to be restricted to a subset of neurons, microglia cells, and oligodendrocytes (PubMed:24994998).</text>
</comment>
<comment type="PTM">
    <text>Not N-glycosylated.</text>
</comment>
<comment type="disruption phenotype">
    <text evidence="6">Deficient mice grow and reproduce normally, show no gross phenotype and no obvious neurological defect. Deficient mice, however, display increased plasma, muscle and kidney aromatic amino acids (AAA) concentration under both normal and high protein diet, although this concentration remains normal in the liver, but it does not alter thyroid hormones homeostasis.</text>
</comment>
<comment type="similarity">
    <text evidence="9">Belongs to the major facilitator superfamily. Monocarboxylate porter (TC 2.A.1.13) family.</text>
</comment>
<comment type="sequence caution" evidence="9">
    <conflict type="erroneous initiation">
        <sequence resource="EMBL-CDS" id="BAE38097"/>
    </conflict>
</comment>
<proteinExistence type="evidence at protein level"/>
<evidence type="ECO:0000250" key="1">
    <source>
        <dbReference type="UniProtKB" id="Q8TF71"/>
    </source>
</evidence>
<evidence type="ECO:0000250" key="2">
    <source>
        <dbReference type="UniProtKB" id="Q91Y77"/>
    </source>
</evidence>
<evidence type="ECO:0000255" key="3"/>
<evidence type="ECO:0000256" key="4">
    <source>
        <dbReference type="SAM" id="MobiDB-lite"/>
    </source>
</evidence>
<evidence type="ECO:0000269" key="5">
    <source>
    </source>
</evidence>
<evidence type="ECO:0000269" key="6">
    <source>
    </source>
</evidence>
<evidence type="ECO:0000269" key="7">
    <source>
    </source>
</evidence>
<evidence type="ECO:0000303" key="8">
    <source>
    </source>
</evidence>
<evidence type="ECO:0000305" key="9"/>
<evidence type="ECO:0000305" key="10">
    <source>
    </source>
</evidence>
<evidence type="ECO:0007744" key="11">
    <source>
    </source>
</evidence>
<evidence type="ECO:0007744" key="12">
    <source>
    </source>
</evidence>
<dbReference type="EMBL" id="AK050229">
    <property type="protein sequence ID" value="BAC34135.1"/>
    <property type="molecule type" value="mRNA"/>
</dbReference>
<dbReference type="EMBL" id="AK151290">
    <property type="protein sequence ID" value="BAE30275.1"/>
    <property type="molecule type" value="mRNA"/>
</dbReference>
<dbReference type="EMBL" id="AK151704">
    <property type="protein sequence ID" value="BAE30627.1"/>
    <property type="molecule type" value="mRNA"/>
</dbReference>
<dbReference type="EMBL" id="AK157355">
    <property type="protein sequence ID" value="BAE34061.1"/>
    <property type="molecule type" value="mRNA"/>
</dbReference>
<dbReference type="EMBL" id="AK165240">
    <property type="protein sequence ID" value="BAE38097.1"/>
    <property type="status" value="ALT_INIT"/>
    <property type="molecule type" value="mRNA"/>
</dbReference>
<dbReference type="EMBL" id="AK165579">
    <property type="protein sequence ID" value="BAE38270.1"/>
    <property type="molecule type" value="mRNA"/>
</dbReference>
<dbReference type="CCDS" id="CCDS48543.1">
    <molecule id="Q3U9N9-1"/>
</dbReference>
<dbReference type="CCDS" id="CCDS87990.1">
    <molecule id="Q3U9N9-2"/>
</dbReference>
<dbReference type="RefSeq" id="NP_001107804.1">
    <molecule id="Q3U9N9-1"/>
    <property type="nucleotide sequence ID" value="NM_001114332.1"/>
</dbReference>
<dbReference type="RefSeq" id="NP_082523.1">
    <molecule id="Q3U9N9-2"/>
    <property type="nucleotide sequence ID" value="NM_028247.4"/>
</dbReference>
<dbReference type="SMR" id="Q3U9N9"/>
<dbReference type="BioGRID" id="215388">
    <property type="interactions" value="2"/>
</dbReference>
<dbReference type="FunCoup" id="Q3U9N9">
    <property type="interactions" value="262"/>
</dbReference>
<dbReference type="STRING" id="10090.ENSMUSP00000090227"/>
<dbReference type="iPTMnet" id="Q3U9N9"/>
<dbReference type="PhosphoSitePlus" id="Q3U9N9"/>
<dbReference type="SwissPalm" id="Q3U9N9"/>
<dbReference type="jPOST" id="Q3U9N9"/>
<dbReference type="PaxDb" id="10090-ENSMUSP00000090227"/>
<dbReference type="PeptideAtlas" id="Q3U9N9"/>
<dbReference type="ProteomicsDB" id="291482">
    <molecule id="Q3U9N9-1"/>
</dbReference>
<dbReference type="ProteomicsDB" id="291483">
    <molecule id="Q3U9N9-2"/>
</dbReference>
<dbReference type="Antibodypedia" id="19300">
    <property type="antibodies" value="112 antibodies from 21 providers"/>
</dbReference>
<dbReference type="DNASU" id="72472"/>
<dbReference type="Ensembl" id="ENSMUST00000092566.8">
    <molecule id="Q3U9N9-1"/>
    <property type="protein sequence ID" value="ENSMUSP00000090227.7"/>
    <property type="gene ID" value="ENSMUSG00000019838.12"/>
</dbReference>
<dbReference type="Ensembl" id="ENSMUST00000213488.2">
    <molecule id="Q3U9N9-2"/>
    <property type="protein sequence ID" value="ENSMUSP00000150416.2"/>
    <property type="gene ID" value="ENSMUSG00000019838.12"/>
</dbReference>
<dbReference type="GeneID" id="72472"/>
<dbReference type="KEGG" id="mmu:72472"/>
<dbReference type="UCSC" id="uc007ewm.2">
    <molecule id="Q3U9N9-1"/>
    <property type="organism name" value="mouse"/>
</dbReference>
<dbReference type="UCSC" id="uc007ewn.2">
    <molecule id="Q3U9N9-2"/>
    <property type="organism name" value="mouse"/>
</dbReference>
<dbReference type="AGR" id="MGI:1919722"/>
<dbReference type="CTD" id="117247"/>
<dbReference type="MGI" id="MGI:1919722">
    <property type="gene designation" value="Slc16a10"/>
</dbReference>
<dbReference type="VEuPathDB" id="HostDB:ENSMUSG00000019838"/>
<dbReference type="eggNOG" id="KOG2504">
    <property type="taxonomic scope" value="Eukaryota"/>
</dbReference>
<dbReference type="GeneTree" id="ENSGT00940000157966"/>
<dbReference type="HOGENOM" id="CLU_001265_59_1_1"/>
<dbReference type="InParanoid" id="Q3U9N9"/>
<dbReference type="OMA" id="LSYRIWA"/>
<dbReference type="OrthoDB" id="6499973at2759"/>
<dbReference type="PhylomeDB" id="Q3U9N9"/>
<dbReference type="TreeFam" id="TF313792"/>
<dbReference type="Reactome" id="R-MMU-352230">
    <property type="pathway name" value="Amino acid transport across the plasma membrane"/>
</dbReference>
<dbReference type="BioGRID-ORCS" id="72472">
    <property type="hits" value="3 hits in 77 CRISPR screens"/>
</dbReference>
<dbReference type="ChiTaRS" id="Slc16a10">
    <property type="organism name" value="mouse"/>
</dbReference>
<dbReference type="PRO" id="PR:Q3U9N9"/>
<dbReference type="Proteomes" id="UP000000589">
    <property type="component" value="Chromosome 10"/>
</dbReference>
<dbReference type="RNAct" id="Q3U9N9">
    <property type="molecule type" value="protein"/>
</dbReference>
<dbReference type="Bgee" id="ENSMUSG00000019838">
    <property type="expression patterns" value="Expressed in small intestine Peyer's patch and 162 other cell types or tissues"/>
</dbReference>
<dbReference type="ExpressionAtlas" id="Q3U9N9">
    <property type="expression patterns" value="baseline and differential"/>
</dbReference>
<dbReference type="GO" id="GO:0016323">
    <property type="term" value="C:basolateral plasma membrane"/>
    <property type="evidence" value="ECO:0000314"/>
    <property type="project" value="UniProtKB"/>
</dbReference>
<dbReference type="GO" id="GO:0030054">
    <property type="term" value="C:cell junction"/>
    <property type="evidence" value="ECO:0007669"/>
    <property type="project" value="Ensembl"/>
</dbReference>
<dbReference type="GO" id="GO:0043231">
    <property type="term" value="C:intracellular membrane-bounded organelle"/>
    <property type="evidence" value="ECO:0007669"/>
    <property type="project" value="Ensembl"/>
</dbReference>
<dbReference type="GO" id="GO:0015173">
    <property type="term" value="F:aromatic amino acid transmembrane transporter activity"/>
    <property type="evidence" value="ECO:0000314"/>
    <property type="project" value="UniProtKB"/>
</dbReference>
<dbReference type="GO" id="GO:0015192">
    <property type="term" value="F:L-phenylalanine transmembrane transporter activity"/>
    <property type="evidence" value="ECO:0000314"/>
    <property type="project" value="UniProtKB"/>
</dbReference>
<dbReference type="GO" id="GO:0015196">
    <property type="term" value="F:L-tryptophan transmembrane transporter activity"/>
    <property type="evidence" value="ECO:0000314"/>
    <property type="project" value="UniProtKB"/>
</dbReference>
<dbReference type="GO" id="GO:0005302">
    <property type="term" value="F:L-tyrosine transmembrane transporter activity"/>
    <property type="evidence" value="ECO:0000314"/>
    <property type="project" value="UniProtKB"/>
</dbReference>
<dbReference type="GO" id="GO:0015349">
    <property type="term" value="F:thyroid hormone transmembrane transporter activity"/>
    <property type="evidence" value="ECO:0000250"/>
    <property type="project" value="UniProtKB"/>
</dbReference>
<dbReference type="GO" id="GO:0015801">
    <property type="term" value="P:aromatic amino acid transport"/>
    <property type="evidence" value="ECO:0000314"/>
    <property type="project" value="UniProtKB"/>
</dbReference>
<dbReference type="GO" id="GO:0006590">
    <property type="term" value="P:thyroid hormone generation"/>
    <property type="evidence" value="ECO:0000316"/>
    <property type="project" value="MGI"/>
</dbReference>
<dbReference type="GO" id="GO:0070327">
    <property type="term" value="P:thyroid hormone transport"/>
    <property type="evidence" value="ECO:0000316"/>
    <property type="project" value="MGI"/>
</dbReference>
<dbReference type="GO" id="GO:0070460">
    <property type="term" value="P:thyroid-stimulating hormone secretion"/>
    <property type="evidence" value="ECO:0000316"/>
    <property type="project" value="MGI"/>
</dbReference>
<dbReference type="FunFam" id="1.20.1250.20:FF:001016">
    <property type="entry name" value="Solute carrier family 16 member 2"/>
    <property type="match status" value="1"/>
</dbReference>
<dbReference type="Gene3D" id="1.20.1250.20">
    <property type="entry name" value="MFS general substrate transporter like domains"/>
    <property type="match status" value="2"/>
</dbReference>
<dbReference type="InterPro" id="IPR011701">
    <property type="entry name" value="MFS"/>
</dbReference>
<dbReference type="InterPro" id="IPR020846">
    <property type="entry name" value="MFS_dom"/>
</dbReference>
<dbReference type="InterPro" id="IPR036259">
    <property type="entry name" value="MFS_trans_sf"/>
</dbReference>
<dbReference type="InterPro" id="IPR050327">
    <property type="entry name" value="Proton-linked_MCT"/>
</dbReference>
<dbReference type="PANTHER" id="PTHR11360">
    <property type="entry name" value="MONOCARBOXYLATE TRANSPORTER"/>
    <property type="match status" value="1"/>
</dbReference>
<dbReference type="PANTHER" id="PTHR11360:SF119">
    <property type="entry name" value="MONOCARBOXYLATE TRANSPORTER 10"/>
    <property type="match status" value="1"/>
</dbReference>
<dbReference type="Pfam" id="PF07690">
    <property type="entry name" value="MFS_1"/>
    <property type="match status" value="1"/>
</dbReference>
<dbReference type="SUPFAM" id="SSF103473">
    <property type="entry name" value="MFS general substrate transporter"/>
    <property type="match status" value="1"/>
</dbReference>
<dbReference type="PROSITE" id="PS50850">
    <property type="entry name" value="MFS"/>
    <property type="match status" value="1"/>
</dbReference>
<reference key="1">
    <citation type="journal article" date="2005" name="Science">
        <title>The transcriptional landscape of the mammalian genome.</title>
        <authorList>
            <person name="Carninci P."/>
            <person name="Kasukawa T."/>
            <person name="Katayama S."/>
            <person name="Gough J."/>
            <person name="Frith M.C."/>
            <person name="Maeda N."/>
            <person name="Oyama R."/>
            <person name="Ravasi T."/>
            <person name="Lenhard B."/>
            <person name="Wells C."/>
            <person name="Kodzius R."/>
            <person name="Shimokawa K."/>
            <person name="Bajic V.B."/>
            <person name="Brenner S.E."/>
            <person name="Batalov S."/>
            <person name="Forrest A.R."/>
            <person name="Zavolan M."/>
            <person name="Davis M.J."/>
            <person name="Wilming L.G."/>
            <person name="Aidinis V."/>
            <person name="Allen J.E."/>
            <person name="Ambesi-Impiombato A."/>
            <person name="Apweiler R."/>
            <person name="Aturaliya R.N."/>
            <person name="Bailey T.L."/>
            <person name="Bansal M."/>
            <person name="Baxter L."/>
            <person name="Beisel K.W."/>
            <person name="Bersano T."/>
            <person name="Bono H."/>
            <person name="Chalk A.M."/>
            <person name="Chiu K.P."/>
            <person name="Choudhary V."/>
            <person name="Christoffels A."/>
            <person name="Clutterbuck D.R."/>
            <person name="Crowe M.L."/>
            <person name="Dalla E."/>
            <person name="Dalrymple B.P."/>
            <person name="de Bono B."/>
            <person name="Della Gatta G."/>
            <person name="di Bernardo D."/>
            <person name="Down T."/>
            <person name="Engstrom P."/>
            <person name="Fagiolini M."/>
            <person name="Faulkner G."/>
            <person name="Fletcher C.F."/>
            <person name="Fukushima T."/>
            <person name="Furuno M."/>
            <person name="Futaki S."/>
            <person name="Gariboldi M."/>
            <person name="Georgii-Hemming P."/>
            <person name="Gingeras T.R."/>
            <person name="Gojobori T."/>
            <person name="Green R.E."/>
            <person name="Gustincich S."/>
            <person name="Harbers M."/>
            <person name="Hayashi Y."/>
            <person name="Hensch T.K."/>
            <person name="Hirokawa N."/>
            <person name="Hill D."/>
            <person name="Huminiecki L."/>
            <person name="Iacono M."/>
            <person name="Ikeo K."/>
            <person name="Iwama A."/>
            <person name="Ishikawa T."/>
            <person name="Jakt M."/>
            <person name="Kanapin A."/>
            <person name="Katoh M."/>
            <person name="Kawasawa Y."/>
            <person name="Kelso J."/>
            <person name="Kitamura H."/>
            <person name="Kitano H."/>
            <person name="Kollias G."/>
            <person name="Krishnan S.P."/>
            <person name="Kruger A."/>
            <person name="Kummerfeld S.K."/>
            <person name="Kurochkin I.V."/>
            <person name="Lareau L.F."/>
            <person name="Lazarevic D."/>
            <person name="Lipovich L."/>
            <person name="Liu J."/>
            <person name="Liuni S."/>
            <person name="McWilliam S."/>
            <person name="Madan Babu M."/>
            <person name="Madera M."/>
            <person name="Marchionni L."/>
            <person name="Matsuda H."/>
            <person name="Matsuzawa S."/>
            <person name="Miki H."/>
            <person name="Mignone F."/>
            <person name="Miyake S."/>
            <person name="Morris K."/>
            <person name="Mottagui-Tabar S."/>
            <person name="Mulder N."/>
            <person name="Nakano N."/>
            <person name="Nakauchi H."/>
            <person name="Ng P."/>
            <person name="Nilsson R."/>
            <person name="Nishiguchi S."/>
            <person name="Nishikawa S."/>
            <person name="Nori F."/>
            <person name="Ohara O."/>
            <person name="Okazaki Y."/>
            <person name="Orlando V."/>
            <person name="Pang K.C."/>
            <person name="Pavan W.J."/>
            <person name="Pavesi G."/>
            <person name="Pesole G."/>
            <person name="Petrovsky N."/>
            <person name="Piazza S."/>
            <person name="Reed J."/>
            <person name="Reid J.F."/>
            <person name="Ring B.Z."/>
            <person name="Ringwald M."/>
            <person name="Rost B."/>
            <person name="Ruan Y."/>
            <person name="Salzberg S.L."/>
            <person name="Sandelin A."/>
            <person name="Schneider C."/>
            <person name="Schoenbach C."/>
            <person name="Sekiguchi K."/>
            <person name="Semple C.A."/>
            <person name="Seno S."/>
            <person name="Sessa L."/>
            <person name="Sheng Y."/>
            <person name="Shibata Y."/>
            <person name="Shimada H."/>
            <person name="Shimada K."/>
            <person name="Silva D."/>
            <person name="Sinclair B."/>
            <person name="Sperling S."/>
            <person name="Stupka E."/>
            <person name="Sugiura K."/>
            <person name="Sultana R."/>
            <person name="Takenaka Y."/>
            <person name="Taki K."/>
            <person name="Tammoja K."/>
            <person name="Tan S.L."/>
            <person name="Tang S."/>
            <person name="Taylor M.S."/>
            <person name="Tegner J."/>
            <person name="Teichmann S.A."/>
            <person name="Ueda H.R."/>
            <person name="van Nimwegen E."/>
            <person name="Verardo R."/>
            <person name="Wei C.L."/>
            <person name="Yagi K."/>
            <person name="Yamanishi H."/>
            <person name="Zabarovsky E."/>
            <person name="Zhu S."/>
            <person name="Zimmer A."/>
            <person name="Hide W."/>
            <person name="Bult C."/>
            <person name="Grimmond S.M."/>
            <person name="Teasdale R.D."/>
            <person name="Liu E.T."/>
            <person name="Brusic V."/>
            <person name="Quackenbush J."/>
            <person name="Wahlestedt C."/>
            <person name="Mattick J.S."/>
            <person name="Hume D.A."/>
            <person name="Kai C."/>
            <person name="Sasaki D."/>
            <person name="Tomaru Y."/>
            <person name="Fukuda S."/>
            <person name="Kanamori-Katayama M."/>
            <person name="Suzuki M."/>
            <person name="Aoki J."/>
            <person name="Arakawa T."/>
            <person name="Iida J."/>
            <person name="Imamura K."/>
            <person name="Itoh M."/>
            <person name="Kato T."/>
            <person name="Kawaji H."/>
            <person name="Kawagashira N."/>
            <person name="Kawashima T."/>
            <person name="Kojima M."/>
            <person name="Kondo S."/>
            <person name="Konno H."/>
            <person name="Nakano K."/>
            <person name="Ninomiya N."/>
            <person name="Nishio T."/>
            <person name="Okada M."/>
            <person name="Plessy C."/>
            <person name="Shibata K."/>
            <person name="Shiraki T."/>
            <person name="Suzuki S."/>
            <person name="Tagami M."/>
            <person name="Waki K."/>
            <person name="Watahiki A."/>
            <person name="Okamura-Oho Y."/>
            <person name="Suzuki H."/>
            <person name="Kawai J."/>
            <person name="Hayashizaki Y."/>
        </authorList>
    </citation>
    <scope>NUCLEOTIDE SEQUENCE [LARGE SCALE MRNA] (ISOFORMS 1 AND 2)</scope>
    <source>
        <strain>C57BL/6J</strain>
        <strain>NOD</strain>
        <tissue>Bone marrow</tissue>
        <tissue>Spleen</tissue>
    </source>
</reference>
<reference key="2">
    <citation type="journal article" date="2006" name="J. Cell. Physiol.">
        <title>Basolateral aromatic amino acid transporter TAT1 (Slc16a10) functions as an efflux pathway.</title>
        <authorList>
            <person name="Ramadan T."/>
            <person name="Camargo S.M."/>
            <person name="Summa V."/>
            <person name="Hunziker P."/>
            <person name="Chesnov S."/>
            <person name="Pos K.M."/>
            <person name="Verrey F."/>
        </authorList>
    </citation>
    <scope>TISSUE SPECIFICITY</scope>
    <scope>SUBCELLULAR LOCATION</scope>
    <scope>FUNCTION</scope>
    <scope>TRANSPORTER ACTIVITY</scope>
    <scope>LACK OF GLYCOSYLATION</scope>
</reference>
<reference key="3">
    <citation type="journal article" date="2007" name="Proc. Natl. Acad. Sci. U.S.A.">
        <title>Large-scale phosphorylation analysis of mouse liver.</title>
        <authorList>
            <person name="Villen J."/>
            <person name="Beausoleil S.A."/>
            <person name="Gerber S.A."/>
            <person name="Gygi S.P."/>
        </authorList>
    </citation>
    <scope>IDENTIFICATION BY MASS SPECTROMETRY [LARGE SCALE ANALYSIS]</scope>
    <source>
        <tissue>Liver</tissue>
    </source>
</reference>
<reference key="4">
    <citation type="journal article" date="2009" name="Immunity">
        <title>The phagosomal proteome in interferon-gamma-activated macrophages.</title>
        <authorList>
            <person name="Trost M."/>
            <person name="English L."/>
            <person name="Lemieux S."/>
            <person name="Courcelles M."/>
            <person name="Desjardins M."/>
            <person name="Thibault P."/>
        </authorList>
    </citation>
    <scope>PHOSPHORYLATION [LARGE SCALE ANALYSIS] AT SER-495; SER-498 AND SER-501</scope>
    <scope>IDENTIFICATION BY MASS SPECTROMETRY [LARGE SCALE ANALYSIS]</scope>
</reference>
<reference key="5">
    <citation type="journal article" date="2010" name="Cell">
        <title>A tissue-specific atlas of mouse protein phosphorylation and expression.</title>
        <authorList>
            <person name="Huttlin E.L."/>
            <person name="Jedrychowski M.P."/>
            <person name="Elias J.E."/>
            <person name="Goswami T."/>
            <person name="Rad R."/>
            <person name="Beausoleil S.A."/>
            <person name="Villen J."/>
            <person name="Haas W."/>
            <person name="Sowa M.E."/>
            <person name="Gygi S.P."/>
        </authorList>
    </citation>
    <scope>PHOSPHORYLATION [LARGE SCALE ANALYSIS] AT SER-498; SER-500 AND SER-501</scope>
    <scope>IDENTIFICATION BY MASS SPECTROMETRY [LARGE SCALE ANALYSIS]</scope>
    <source>
        <tissue>Brown adipose tissue</tissue>
        <tissue>Heart</tissue>
        <tissue>Kidney</tissue>
        <tissue>Liver</tissue>
        <tissue>Lung</tissue>
        <tissue>Spleen</tissue>
    </source>
</reference>
<reference key="6">
    <citation type="journal article" date="2012" name="J. Physiol. (Lond.)">
        <title>T-type amino acid transporter TAT1 (Slc16a10) is essential for extracellular aromatic amino acid homeostasis control.</title>
        <authorList>
            <person name="Mariotta L."/>
            <person name="Ramadan T."/>
            <person name="Singer D."/>
            <person name="Guetg A."/>
            <person name="Herzog B."/>
            <person name="Stoeger C."/>
            <person name="Palacin M."/>
            <person name="Lahoutte T."/>
            <person name="Camargo S.M."/>
            <person name="Verrey F."/>
        </authorList>
    </citation>
    <scope>DISRUPTION PHENOTYPE</scope>
    <scope>FUNCTION</scope>
</reference>
<reference key="7">
    <citation type="journal article" date="2014" name="Front. Endocrinol.">
        <title>Expression pattern of thyroid hormone transporters in the postnatal mouse brain.</title>
        <authorList>
            <person name="Mueller J."/>
            <person name="Heuer H."/>
        </authorList>
    </citation>
    <scope>TISSUE SPECIFICITY</scope>
</reference>
<gene>
    <name type="primary">Slc16a10</name>
    <name type="synonym">Mct10</name>
    <name type="synonym">Tat1</name>
</gene>